<name>DGCQ_ECO57</name>
<reference key="1">
    <citation type="journal article" date="2001" name="Nature">
        <title>Genome sequence of enterohaemorrhagic Escherichia coli O157:H7.</title>
        <authorList>
            <person name="Perna N.T."/>
            <person name="Plunkett G. III"/>
            <person name="Burland V."/>
            <person name="Mau B."/>
            <person name="Glasner J.D."/>
            <person name="Rose D.J."/>
            <person name="Mayhew G.F."/>
            <person name="Evans P.S."/>
            <person name="Gregor J."/>
            <person name="Kirkpatrick H.A."/>
            <person name="Posfai G."/>
            <person name="Hackett J."/>
            <person name="Klink S."/>
            <person name="Boutin A."/>
            <person name="Shao Y."/>
            <person name="Miller L."/>
            <person name="Grotbeck E.J."/>
            <person name="Davis N.W."/>
            <person name="Lim A."/>
            <person name="Dimalanta E.T."/>
            <person name="Potamousis K."/>
            <person name="Apodaca J."/>
            <person name="Anantharaman T.S."/>
            <person name="Lin J."/>
            <person name="Yen G."/>
            <person name="Schwartz D.C."/>
            <person name="Welch R.A."/>
            <person name="Blattner F.R."/>
        </authorList>
    </citation>
    <scope>NUCLEOTIDE SEQUENCE [LARGE SCALE GENOMIC DNA]</scope>
    <source>
        <strain>O157:H7 / EDL933 / ATCC 700927 / EHEC</strain>
    </source>
</reference>
<reference key="2">
    <citation type="journal article" date="2001" name="DNA Res.">
        <title>Complete genome sequence of enterohemorrhagic Escherichia coli O157:H7 and genomic comparison with a laboratory strain K-12.</title>
        <authorList>
            <person name="Hayashi T."/>
            <person name="Makino K."/>
            <person name="Ohnishi M."/>
            <person name="Kurokawa K."/>
            <person name="Ishii K."/>
            <person name="Yokoyama K."/>
            <person name="Han C.-G."/>
            <person name="Ohtsubo E."/>
            <person name="Nakayama K."/>
            <person name="Murata T."/>
            <person name="Tanaka M."/>
            <person name="Tobe T."/>
            <person name="Iida T."/>
            <person name="Takami H."/>
            <person name="Honda T."/>
            <person name="Sasakawa C."/>
            <person name="Ogasawara N."/>
            <person name="Yasunaga T."/>
            <person name="Kuhara S."/>
            <person name="Shiba T."/>
            <person name="Hattori M."/>
            <person name="Shinagawa H."/>
        </authorList>
    </citation>
    <scope>NUCLEOTIDE SEQUENCE [LARGE SCALE GENOMIC DNA]</scope>
    <source>
        <strain>O157:H7 / Sakai / RIMD 0509952 / EHEC</strain>
    </source>
</reference>
<keyword id="KW-0997">Cell inner membrane</keyword>
<keyword id="KW-1003">Cell membrane</keyword>
<keyword id="KW-0135">Cellulose biosynthesis</keyword>
<keyword id="KW-0342">GTP-binding</keyword>
<keyword id="KW-0460">Magnesium</keyword>
<keyword id="KW-0472">Membrane</keyword>
<keyword id="KW-0479">Metal-binding</keyword>
<keyword id="KW-0547">Nucleotide-binding</keyword>
<keyword id="KW-1185">Reference proteome</keyword>
<keyword id="KW-0808">Transferase</keyword>
<keyword id="KW-0812">Transmembrane</keyword>
<keyword id="KW-1133">Transmembrane helix</keyword>
<comment type="function">
    <text evidence="1 2">Catalyzes the synthesis of cyclic-di-GMP (c-di-GMP) via the condensation of 2 GTP molecules (By similarity). Cyclic-di-GMP is a second messenger which controls cell surface-associated traits in bacteria. Involved in the regulation of cellulose production (By similarity).</text>
</comment>
<comment type="catalytic activity">
    <reaction evidence="1">
        <text>2 GTP = 3',3'-c-di-GMP + 2 diphosphate</text>
        <dbReference type="Rhea" id="RHEA:24898"/>
        <dbReference type="ChEBI" id="CHEBI:33019"/>
        <dbReference type="ChEBI" id="CHEBI:37565"/>
        <dbReference type="ChEBI" id="CHEBI:58805"/>
        <dbReference type="EC" id="2.7.7.65"/>
    </reaction>
</comment>
<comment type="cofactor">
    <cofactor evidence="1">
        <name>Mg(2+)</name>
        <dbReference type="ChEBI" id="CHEBI:18420"/>
    </cofactor>
    <text evidence="1">Binds 1 Mg(2+) ion per monomer.</text>
</comment>
<comment type="pathway">
    <text evidence="2">Glycan metabolism; bacterial cellulose biosynthesis.</text>
</comment>
<comment type="pathway">
    <text evidence="2">Purine metabolism; 3',5'-cyclic di-GMP biosynthesis.</text>
</comment>
<comment type="subunit">
    <text evidence="1">Homodimer.</text>
</comment>
<comment type="subcellular location">
    <subcellularLocation>
        <location evidence="5">Cell inner membrane</location>
        <topology evidence="3">Multi-pass membrane protein</topology>
    </subcellularLocation>
</comment>
<dbReference type="EC" id="2.7.7.65" evidence="2"/>
<dbReference type="EMBL" id="AE005174">
    <property type="protein sequence ID" value="AAG56970.1"/>
    <property type="molecule type" value="Genomic_DNA"/>
</dbReference>
<dbReference type="EMBL" id="BA000007">
    <property type="protein sequence ID" value="BAB36117.1"/>
    <property type="molecule type" value="Genomic_DNA"/>
</dbReference>
<dbReference type="PIR" id="F85813">
    <property type="entry name" value="F85813"/>
</dbReference>
<dbReference type="PIR" id="F90965">
    <property type="entry name" value="F90965"/>
</dbReference>
<dbReference type="RefSeq" id="NP_310721.1">
    <property type="nucleotide sequence ID" value="NC_002695.1"/>
</dbReference>
<dbReference type="RefSeq" id="WP_001302088.1">
    <property type="nucleotide sequence ID" value="NZ_VOAI01000028.1"/>
</dbReference>
<dbReference type="SMR" id="Q8XB92"/>
<dbReference type="STRING" id="155864.Z3047"/>
<dbReference type="GeneID" id="912776"/>
<dbReference type="KEGG" id="ece:Z3047"/>
<dbReference type="KEGG" id="ecs:ECs_2694"/>
<dbReference type="PATRIC" id="fig|386585.9.peg.2822"/>
<dbReference type="eggNOG" id="COG3706">
    <property type="taxonomic scope" value="Bacteria"/>
</dbReference>
<dbReference type="HOGENOM" id="CLU_000445_11_23_6"/>
<dbReference type="OMA" id="QFNIDRM"/>
<dbReference type="UniPathway" id="UPA00599"/>
<dbReference type="UniPathway" id="UPA00694"/>
<dbReference type="Proteomes" id="UP000000558">
    <property type="component" value="Chromosome"/>
</dbReference>
<dbReference type="Proteomes" id="UP000002519">
    <property type="component" value="Chromosome"/>
</dbReference>
<dbReference type="GO" id="GO:0005886">
    <property type="term" value="C:plasma membrane"/>
    <property type="evidence" value="ECO:0007669"/>
    <property type="project" value="UniProtKB-SubCell"/>
</dbReference>
<dbReference type="GO" id="GO:0052621">
    <property type="term" value="F:diguanylate cyclase activity"/>
    <property type="evidence" value="ECO:0007669"/>
    <property type="project" value="UniProtKB-EC"/>
</dbReference>
<dbReference type="GO" id="GO:0005525">
    <property type="term" value="F:GTP binding"/>
    <property type="evidence" value="ECO:0007669"/>
    <property type="project" value="UniProtKB-KW"/>
</dbReference>
<dbReference type="GO" id="GO:0046872">
    <property type="term" value="F:metal ion binding"/>
    <property type="evidence" value="ECO:0007669"/>
    <property type="project" value="UniProtKB-KW"/>
</dbReference>
<dbReference type="GO" id="GO:0043709">
    <property type="term" value="P:cell adhesion involved in single-species biofilm formation"/>
    <property type="evidence" value="ECO:0007669"/>
    <property type="project" value="TreeGrafter"/>
</dbReference>
<dbReference type="GO" id="GO:0030244">
    <property type="term" value="P:cellulose biosynthetic process"/>
    <property type="evidence" value="ECO:0007669"/>
    <property type="project" value="UniProtKB-KW"/>
</dbReference>
<dbReference type="GO" id="GO:1902201">
    <property type="term" value="P:negative regulation of bacterial-type flagellum-dependent cell motility"/>
    <property type="evidence" value="ECO:0007669"/>
    <property type="project" value="TreeGrafter"/>
</dbReference>
<dbReference type="CDD" id="cd01949">
    <property type="entry name" value="GGDEF"/>
    <property type="match status" value="1"/>
</dbReference>
<dbReference type="FunFam" id="3.30.70.270:FF:000001">
    <property type="entry name" value="Diguanylate cyclase domain protein"/>
    <property type="match status" value="1"/>
</dbReference>
<dbReference type="Gene3D" id="3.30.70.270">
    <property type="match status" value="1"/>
</dbReference>
<dbReference type="InterPro" id="IPR033416">
    <property type="entry name" value="CHASE7"/>
</dbReference>
<dbReference type="InterPro" id="IPR050469">
    <property type="entry name" value="Diguanylate_Cyclase"/>
</dbReference>
<dbReference type="InterPro" id="IPR000160">
    <property type="entry name" value="GGDEF_dom"/>
</dbReference>
<dbReference type="InterPro" id="IPR029787">
    <property type="entry name" value="Nucleotide_cyclase"/>
</dbReference>
<dbReference type="InterPro" id="IPR043128">
    <property type="entry name" value="Rev_trsase/Diguanyl_cyclase"/>
</dbReference>
<dbReference type="NCBIfam" id="TIGR00254">
    <property type="entry name" value="GGDEF"/>
    <property type="match status" value="1"/>
</dbReference>
<dbReference type="NCBIfam" id="NF011955">
    <property type="entry name" value="PRK15426.1"/>
    <property type="match status" value="1"/>
</dbReference>
<dbReference type="PANTHER" id="PTHR45138:SF16">
    <property type="entry name" value="DIGUANYLATE CYCLASE DGCQ-RELATED"/>
    <property type="match status" value="1"/>
</dbReference>
<dbReference type="PANTHER" id="PTHR45138">
    <property type="entry name" value="REGULATORY COMPONENTS OF SENSORY TRANSDUCTION SYSTEM"/>
    <property type="match status" value="1"/>
</dbReference>
<dbReference type="Pfam" id="PF17151">
    <property type="entry name" value="CHASE7"/>
    <property type="match status" value="1"/>
</dbReference>
<dbReference type="Pfam" id="PF00990">
    <property type="entry name" value="GGDEF"/>
    <property type="match status" value="1"/>
</dbReference>
<dbReference type="SMART" id="SM00267">
    <property type="entry name" value="GGDEF"/>
    <property type="match status" value="1"/>
</dbReference>
<dbReference type="SUPFAM" id="SSF55073">
    <property type="entry name" value="Nucleotide cyclase"/>
    <property type="match status" value="1"/>
</dbReference>
<dbReference type="PROSITE" id="PS50887">
    <property type="entry name" value="GGDEF"/>
    <property type="match status" value="1"/>
</dbReference>
<organism>
    <name type="scientific">Escherichia coli O157:H7</name>
    <dbReference type="NCBI Taxonomy" id="83334"/>
    <lineage>
        <taxon>Bacteria</taxon>
        <taxon>Pseudomonadati</taxon>
        <taxon>Pseudomonadota</taxon>
        <taxon>Gammaproteobacteria</taxon>
        <taxon>Enterobacterales</taxon>
        <taxon>Enterobacteriaceae</taxon>
        <taxon>Escherichia</taxon>
    </lineage>
</organism>
<proteinExistence type="inferred from homology"/>
<gene>
    <name evidence="2" type="primary">dgcQ</name>
    <name type="synonym">yedQ</name>
    <name type="ordered locus">Z3047</name>
    <name type="ordered locus">ECs2694</name>
</gene>
<sequence length="564" mass="64287">MQHETKMENQSWLKKLARRLGPGHIVNLCFIVVLLFSTLLTWREVVVLEDAYISSQRNHLENVANALDKHLQYNVDKLIFLRNGMREALVAPLDFTSLRDAVTEFEQHRDEHAWQIELNRRRTLSVNGVSDALVSEGNLLSRENESLDNEITAALEVGYLLRLAHNSSSMVEQAMYVSRAGFYVSTQPTLFTRNVPTRYYGYVTQPWFIGHSQRENRHRAVRWFTSQPEHASNTEPQVTVSVPVDSNNYWYGVLGMSIPVRTMQQFLRNAIDKNLDGEYQLYDSKLRFLTSSNPDHPTGNIFDPRELALLAQAMEHDTRGGIRMDSRYVSWERLDHFDGVLVRVHTLSEGVRGDFGSISIALTLLWALFTTMLLISWYVIRRMVSNMYVLQSSLQWQAWHDTLTRLYNRGALFEKARPLAKLCQTHQHPFSVIQVDLDHFKAINDRFGHQAGDRVLSHAAGLISSSLRAQDVAGRVGGEEFCVILPGASLTEAAEVAERIRLKLNEKEMLIAKSTTIRISASLGVSSSEETGDYDFEQLQSLADRRLYLAKQAGRNRVFASDNA</sequence>
<evidence type="ECO:0000250" key="1">
    <source>
        <dbReference type="UniProtKB" id="P31129"/>
    </source>
</evidence>
<evidence type="ECO:0000250" key="2">
    <source>
        <dbReference type="UniProtKB" id="P76330"/>
    </source>
</evidence>
<evidence type="ECO:0000255" key="3"/>
<evidence type="ECO:0000255" key="4">
    <source>
        <dbReference type="PROSITE-ProRule" id="PRU00095"/>
    </source>
</evidence>
<evidence type="ECO:0000305" key="5"/>
<feature type="chain" id="PRO_0000169098" description="Probable diguanylate cyclase DgcQ">
    <location>
        <begin position="1"/>
        <end position="564"/>
    </location>
</feature>
<feature type="transmembrane region" description="Helical" evidence="3">
    <location>
        <begin position="20"/>
        <end position="40"/>
    </location>
</feature>
<feature type="transmembrane region" description="Helical" evidence="3">
    <location>
        <begin position="360"/>
        <end position="380"/>
    </location>
</feature>
<feature type="domain" description="GGDEF" evidence="4">
    <location>
        <begin position="428"/>
        <end position="563"/>
    </location>
</feature>
<feature type="active site" description="Proton acceptor" evidence="3">
    <location>
        <position position="479"/>
    </location>
</feature>
<feature type="binding site" evidence="1">
    <location>
        <position position="436"/>
    </location>
    <ligand>
        <name>Mg(2+)</name>
        <dbReference type="ChEBI" id="CHEBI:18420"/>
    </ligand>
</feature>
<feature type="binding site" evidence="1">
    <location>
        <position position="444"/>
    </location>
    <ligand>
        <name>substrate</name>
    </ligand>
</feature>
<feature type="binding site" evidence="1">
    <location>
        <position position="449"/>
    </location>
    <ligand>
        <name>substrate</name>
    </ligand>
</feature>
<feature type="binding site" evidence="1">
    <location>
        <position position="453"/>
    </location>
    <ligand>
        <name>substrate</name>
    </ligand>
</feature>
<feature type="binding site" evidence="1">
    <location>
        <position position="479"/>
    </location>
    <ligand>
        <name>Mg(2+)</name>
        <dbReference type="ChEBI" id="CHEBI:18420"/>
    </ligand>
</feature>
<feature type="site" description="Transition state stabilizer" evidence="3">
    <location>
        <position position="441"/>
    </location>
</feature>
<protein>
    <recommendedName>
        <fullName evidence="2">Probable diguanylate cyclase DgcQ</fullName>
        <shortName evidence="2">DGC</shortName>
        <ecNumber evidence="2">2.7.7.65</ecNumber>
    </recommendedName>
    <alternativeName>
        <fullName evidence="2">Cellulose synthesis regulatory protein</fullName>
    </alternativeName>
</protein>
<accession>Q8XB92</accession>